<geneLocation type="plasmid">
    <name>F</name>
</geneLocation>
<keyword id="KW-0614">Plasmid</keyword>
<comment type="sequence caution" evidence="1">
    <conflict type="frameshift">
        <sequence resource="EMBL-CDS" id="CAA28297"/>
    </conflict>
</comment>
<gene>
    <name type="primary">yuaZ</name>
    <name type="synonym">yfcA</name>
    <name type="ordered locus">ECOK12F048</name>
</gene>
<sequence>MRLYACCGLLLCPAYPQHFAHGYVDKIPGYPGRAGTLTGLHPMQVCRCRRPPHPVTFRRFSSTRCGFGAAPAFVCGRPVTGAARPDGGRM</sequence>
<accession>P08868</accession>
<name>YUAZ_ECOLI</name>
<feature type="chain" id="PRO_0000197620" description="Uncharacterized protein YuaZ">
    <location>
        <begin position="1"/>
        <end position="90"/>
    </location>
</feature>
<protein>
    <recommendedName>
        <fullName>Uncharacterized protein YuaZ</fullName>
    </recommendedName>
</protein>
<organism>
    <name type="scientific">Escherichia coli (strain K12)</name>
    <dbReference type="NCBI Taxonomy" id="83333"/>
    <lineage>
        <taxon>Bacteria</taxon>
        <taxon>Pseudomonadati</taxon>
        <taxon>Pseudomonadota</taxon>
        <taxon>Gammaproteobacteria</taxon>
        <taxon>Enterobacterales</taxon>
        <taxon>Enterobacteriaceae</taxon>
        <taxon>Escherichia</taxon>
    </lineage>
</organism>
<proteinExistence type="predicted"/>
<reference key="1">
    <citation type="journal article" date="1986" name="J. Mol. Biol.">
        <title>Structure and function of the F plasmid genes essential for partitioning.</title>
        <authorList>
            <person name="Mori H."/>
            <person name="Kondo A."/>
            <person name="Ohshima A."/>
            <person name="Ogura T."/>
            <person name="Hiraga S."/>
        </authorList>
    </citation>
    <scope>NUCLEOTIDE SEQUENCE [GENOMIC DNA]</scope>
    <source>
        <strain>K12</strain>
    </source>
</reference>
<reference key="2">
    <citation type="submission" date="2000-04" db="EMBL/GenBank/DDBJ databases">
        <title>Complete nucleotide sequence of the F plasmid: its implications for organization and diversification of plasmid genomes.</title>
        <authorList>
            <person name="Shimizu H."/>
            <person name="Saitoh Y."/>
            <person name="Suda Y."/>
            <person name="Uehara K."/>
            <person name="Sampei G."/>
            <person name="Mizobuchi K."/>
        </authorList>
    </citation>
    <scope>NUCLEOTIDE SEQUENCE [LARGE SCALE GENOMIC DNA]</scope>
    <source>
        <strain>K12 / CR63</strain>
    </source>
</reference>
<dbReference type="EMBL" id="X04619">
    <property type="protein sequence ID" value="CAA28297.1"/>
    <property type="status" value="ALT_FRAME"/>
    <property type="molecule type" value="Genomic_DNA"/>
</dbReference>
<dbReference type="EMBL" id="AP001918">
    <property type="protein sequence ID" value="BAA97918.1"/>
    <property type="molecule type" value="Genomic_DNA"/>
</dbReference>
<dbReference type="PIR" id="C25783">
    <property type="entry name" value="BVECCF"/>
</dbReference>
<dbReference type="RefSeq" id="NP_061427.1">
    <property type="nucleotide sequence ID" value="NC_002483.1"/>
</dbReference>
<dbReference type="InterPro" id="IPR016388">
    <property type="entry name" value="Put_partitioning_SopC"/>
</dbReference>
<dbReference type="PIRSF" id="PIRSF003278">
    <property type="entry name" value="Partitioning_SopC"/>
    <property type="match status" value="1"/>
</dbReference>
<evidence type="ECO:0000305" key="1"/>